<accession>P24363</accession>
<sequence>MLDRVVVLLSVLCLGVSSQPIPNNQHLFSMAVSRIHHLHLRAQRLFANFESSLQSDDQRQLNKIFLQDFCNSDYIISPIDKHETQRSSVLKLLLISKQLVESWEISSHFLPGGLAERSQISSRLAELREGIQMLITTNQEGAEVFSDSSTLPLAPPFGNFFQTQGGDELQRRSYELLACFKKDMHKVETYLTVAKCRLSTEANCTL</sequence>
<comment type="function">
    <text>Growth hormone plays an important role in growth control and is involved in the regulation of several anabolic processes. Implicated as an osmoregulatory substance important for seawater adaptation.</text>
</comment>
<comment type="subcellular location">
    <subcellularLocation>
        <location>Secreted</location>
    </subcellularLocation>
</comment>
<comment type="similarity">
    <text evidence="2">Belongs to the somatotropin/prolactin family.</text>
</comment>
<name>SOMA_PSEDN</name>
<reference key="1">
    <citation type="journal article" date="1990" name="Biochim. Biophys. Acta">
        <title>Nucleotide sequence of cDNA and primary structure for hard tail growth hormone.</title>
        <authorList>
            <person name="Yamakawa M."/>
            <person name="Watahiki M."/>
            <person name="Kamioka Y."/>
            <person name="Yamamoto M."/>
            <person name="Tanaka M."/>
            <person name="Nishiguchi Y."/>
            <person name="Nakashima K."/>
        </authorList>
    </citation>
    <scope>NUCLEOTIDE SEQUENCE [MRNA]</scope>
    <source>
        <tissue>Pituitary</tissue>
    </source>
</reference>
<keyword id="KW-1015">Disulfide bond</keyword>
<keyword id="KW-0372">Hormone</keyword>
<keyword id="KW-0479">Metal-binding</keyword>
<keyword id="KW-0873">Pyrrolidone carboxylic acid</keyword>
<keyword id="KW-0964">Secreted</keyword>
<keyword id="KW-0732">Signal</keyword>
<keyword id="KW-0862">Zinc</keyword>
<proteinExistence type="evidence at transcript level"/>
<evidence type="ECO:0000250" key="1"/>
<evidence type="ECO:0000305" key="2"/>
<gene>
    <name type="primary">gh</name>
</gene>
<dbReference type="EMBL" id="X55176">
    <property type="protein sequence ID" value="CAA38961.1"/>
    <property type="molecule type" value="mRNA"/>
</dbReference>
<dbReference type="PIR" id="S13161">
    <property type="entry name" value="S13161"/>
</dbReference>
<dbReference type="SMR" id="P24363"/>
<dbReference type="GO" id="GO:0005615">
    <property type="term" value="C:extracellular space"/>
    <property type="evidence" value="ECO:0007669"/>
    <property type="project" value="InterPro"/>
</dbReference>
<dbReference type="GO" id="GO:0070186">
    <property type="term" value="F:growth hormone activity"/>
    <property type="evidence" value="ECO:0007669"/>
    <property type="project" value="TreeGrafter"/>
</dbReference>
<dbReference type="GO" id="GO:0005131">
    <property type="term" value="F:growth hormone receptor binding"/>
    <property type="evidence" value="ECO:0007669"/>
    <property type="project" value="InterPro"/>
</dbReference>
<dbReference type="GO" id="GO:0046872">
    <property type="term" value="F:metal ion binding"/>
    <property type="evidence" value="ECO:0007669"/>
    <property type="project" value="UniProtKB-KW"/>
</dbReference>
<dbReference type="GO" id="GO:0048513">
    <property type="term" value="P:animal organ development"/>
    <property type="evidence" value="ECO:0007669"/>
    <property type="project" value="TreeGrafter"/>
</dbReference>
<dbReference type="GO" id="GO:0060396">
    <property type="term" value="P:growth hormone receptor signaling pathway"/>
    <property type="evidence" value="ECO:0007669"/>
    <property type="project" value="TreeGrafter"/>
</dbReference>
<dbReference type="GO" id="GO:0045927">
    <property type="term" value="P:positive regulation of growth"/>
    <property type="evidence" value="ECO:0007669"/>
    <property type="project" value="TreeGrafter"/>
</dbReference>
<dbReference type="GO" id="GO:0046427">
    <property type="term" value="P:positive regulation of receptor signaling pathway via JAK-STAT"/>
    <property type="evidence" value="ECO:0007669"/>
    <property type="project" value="TreeGrafter"/>
</dbReference>
<dbReference type="GO" id="GO:0031667">
    <property type="term" value="P:response to nutrient levels"/>
    <property type="evidence" value="ECO:0007669"/>
    <property type="project" value="TreeGrafter"/>
</dbReference>
<dbReference type="CDD" id="cd10285">
    <property type="entry name" value="somatotropin_like"/>
    <property type="match status" value="1"/>
</dbReference>
<dbReference type="FunFam" id="1.20.1250.10:FF:000009">
    <property type="entry name" value="Growth hormone"/>
    <property type="match status" value="1"/>
</dbReference>
<dbReference type="Gene3D" id="1.20.1250.10">
    <property type="match status" value="1"/>
</dbReference>
<dbReference type="InterPro" id="IPR009079">
    <property type="entry name" value="4_helix_cytokine-like_core"/>
</dbReference>
<dbReference type="InterPro" id="IPR034975">
    <property type="entry name" value="Somatotropin"/>
</dbReference>
<dbReference type="InterPro" id="IPR001400">
    <property type="entry name" value="Somatotropin/Prolactin"/>
</dbReference>
<dbReference type="InterPro" id="IPR018116">
    <property type="entry name" value="Somatotropin_CS"/>
</dbReference>
<dbReference type="PANTHER" id="PTHR11417:SF2">
    <property type="entry name" value="SOMATOTROPIN"/>
    <property type="match status" value="1"/>
</dbReference>
<dbReference type="PANTHER" id="PTHR11417">
    <property type="entry name" value="SOMATOTROPIN,PROLACTIN"/>
    <property type="match status" value="1"/>
</dbReference>
<dbReference type="Pfam" id="PF00103">
    <property type="entry name" value="Hormone_1"/>
    <property type="match status" value="1"/>
</dbReference>
<dbReference type="PRINTS" id="PR00836">
    <property type="entry name" value="SOMATOTROPIN"/>
</dbReference>
<dbReference type="SUPFAM" id="SSF47266">
    <property type="entry name" value="4-helical cytokines"/>
    <property type="match status" value="1"/>
</dbReference>
<dbReference type="PROSITE" id="PS00266">
    <property type="entry name" value="SOMATOTROPIN_1"/>
    <property type="match status" value="1"/>
</dbReference>
<dbReference type="PROSITE" id="PS00338">
    <property type="entry name" value="SOMATOTROPIN_2"/>
    <property type="match status" value="1"/>
</dbReference>
<organism>
    <name type="scientific">Pseudocaranx dentex</name>
    <name type="common">White trevally</name>
    <name type="synonym">Caranx delicatissimus</name>
    <dbReference type="NCBI Taxonomy" id="349646"/>
    <lineage>
        <taxon>Eukaryota</taxon>
        <taxon>Metazoa</taxon>
        <taxon>Chordata</taxon>
        <taxon>Craniata</taxon>
        <taxon>Vertebrata</taxon>
        <taxon>Euteleostomi</taxon>
        <taxon>Actinopterygii</taxon>
        <taxon>Neopterygii</taxon>
        <taxon>Teleostei</taxon>
        <taxon>Neoteleostei</taxon>
        <taxon>Acanthomorphata</taxon>
        <taxon>Carangaria</taxon>
        <taxon>Carangiformes</taxon>
        <taxon>Carangidae</taxon>
        <taxon>Pseudocaranx</taxon>
    </lineage>
</organism>
<feature type="signal peptide" evidence="1">
    <location>
        <begin position="1"/>
        <end position="18"/>
    </location>
</feature>
<feature type="chain" id="PRO_0000033016" description="Somatotropin">
    <location>
        <begin position="19"/>
        <end position="206"/>
    </location>
</feature>
<feature type="binding site" evidence="1">
    <location>
        <position position="37"/>
    </location>
    <ligand>
        <name>Zn(2+)</name>
        <dbReference type="ChEBI" id="CHEBI:29105"/>
    </ligand>
</feature>
<feature type="binding site" evidence="1">
    <location>
        <position position="188"/>
    </location>
    <ligand>
        <name>Zn(2+)</name>
        <dbReference type="ChEBI" id="CHEBI:29105"/>
    </ligand>
</feature>
<feature type="modified residue" description="Pyrrolidone carboxylic acid" evidence="1">
    <location>
        <position position="19"/>
    </location>
</feature>
<feature type="disulfide bond" evidence="1">
    <location>
        <begin position="70"/>
        <end position="179"/>
    </location>
</feature>
<feature type="disulfide bond" evidence="1">
    <location>
        <begin position="196"/>
        <end position="204"/>
    </location>
</feature>
<protein>
    <recommendedName>
        <fullName>Somatotropin</fullName>
    </recommendedName>
    <alternativeName>
        <fullName>Growth hormone</fullName>
    </alternativeName>
</protein>